<evidence type="ECO:0000250" key="1"/>
<evidence type="ECO:0000305" key="2"/>
<organism>
    <name type="scientific">Streptococcus pyogenes serotype M3 (strain SSI-1)</name>
    <dbReference type="NCBI Taxonomy" id="193567"/>
    <lineage>
        <taxon>Bacteria</taxon>
        <taxon>Bacillati</taxon>
        <taxon>Bacillota</taxon>
        <taxon>Bacilli</taxon>
        <taxon>Lactobacillales</taxon>
        <taxon>Streptococcaceae</taxon>
        <taxon>Streptococcus</taxon>
    </lineage>
</organism>
<protein>
    <recommendedName>
        <fullName>Methionine--tRNA ligase</fullName>
        <ecNumber>6.1.1.10</ecNumber>
    </recommendedName>
    <alternativeName>
        <fullName>Methionyl-tRNA synthetase</fullName>
        <shortName>MetRS</shortName>
    </alternativeName>
</protein>
<proteinExistence type="inferred from homology"/>
<sequence>MKKPFYITTPIYYPSGKLHIGSAYTTIACDVLARYKRLMGHEVFYLTGLDEHGQKIQTKAKEAGITPQTYVDNMAKDVKALWQLLDISYDKFIRTTDDYHEEVVAAVFEKLLAQDDIYLGEYSGWYSVSDEEFFTESQLKEVFRDEDGQVIGGIAPSGHEVEWVSEESYFLRLSKYADRLVAFFKERPDFIQPDGRMNEMVKNFIEPGLEDLAVSRTTFTWGVPVPSDPKHVVYVWIDALLNYATALGYGQANHANFDKFWNGTVFHMVGKDILRFHSIYWPILLMMLDLPMPDRLIAHGWFVMKDGKMSKSKGNVVYPEMLVERFGLDPLRYYLMRSLPVGSDGTFTPEDYVGRINYELANDLGNLLNRTVAMINKYFDGTVPAYVDNGTAFDADLSQVIDAQLADYHKHMEAVDYPRALEAVWTIIARTNKYIDETAPWVLAKEDGDKAQLASVMAHLAASLRVVAHVIQPFMMETSAAIMAQLGLAPVSDLSTLALADFPANTKVVAKGTPIFPRLDMEAEIDYIKAQMGDSSAISQEKEWVPEEVALKSEKDVITFETFDAVEIRVAEVKEVSKVEGSEKLLRFRVDAGDGQDRQILSGIAKCYPNEQELVGKKLQIVANLKPRKMMKKYISQGMILSAEHGDQLTVLTVDSSVPNGSIIG</sequence>
<feature type="chain" id="PRO_0000411614" description="Methionine--tRNA ligase">
    <location>
        <begin position="1"/>
        <end position="665"/>
    </location>
</feature>
<feature type="domain" description="tRNA-binding">
    <location>
        <begin position="562"/>
        <end position="665"/>
    </location>
</feature>
<feature type="short sequence motif" description="'HIGH' region">
    <location>
        <begin position="12"/>
        <end position="22"/>
    </location>
</feature>
<feature type="short sequence motif" description="'KMSKS' region">
    <location>
        <begin position="308"/>
        <end position="312"/>
    </location>
</feature>
<feature type="binding site" evidence="1">
    <location>
        <position position="311"/>
    </location>
    <ligand>
        <name>ATP</name>
        <dbReference type="ChEBI" id="CHEBI:30616"/>
    </ligand>
</feature>
<accession>P0DG49</accession>
<accession>P59080</accession>
<name>SYM_STRPQ</name>
<dbReference type="EC" id="6.1.1.10"/>
<dbReference type="EMBL" id="BA000034">
    <property type="protein sequence ID" value="BAC64652.1"/>
    <property type="status" value="ALT_INIT"/>
    <property type="molecule type" value="Genomic_DNA"/>
</dbReference>
<dbReference type="RefSeq" id="WP_011054228.1">
    <property type="nucleotide sequence ID" value="NC_004606.1"/>
</dbReference>
<dbReference type="SMR" id="P0DG49"/>
<dbReference type="KEGG" id="sps:SPs1557"/>
<dbReference type="HOGENOM" id="CLU_009710_9_4_9"/>
<dbReference type="GO" id="GO:0005737">
    <property type="term" value="C:cytoplasm"/>
    <property type="evidence" value="ECO:0007669"/>
    <property type="project" value="UniProtKB-SubCell"/>
</dbReference>
<dbReference type="GO" id="GO:0005524">
    <property type="term" value="F:ATP binding"/>
    <property type="evidence" value="ECO:0007669"/>
    <property type="project" value="UniProtKB-UniRule"/>
</dbReference>
<dbReference type="GO" id="GO:0004825">
    <property type="term" value="F:methionine-tRNA ligase activity"/>
    <property type="evidence" value="ECO:0007669"/>
    <property type="project" value="UniProtKB-UniRule"/>
</dbReference>
<dbReference type="GO" id="GO:0000049">
    <property type="term" value="F:tRNA binding"/>
    <property type="evidence" value="ECO:0007669"/>
    <property type="project" value="UniProtKB-KW"/>
</dbReference>
<dbReference type="GO" id="GO:0006431">
    <property type="term" value="P:methionyl-tRNA aminoacylation"/>
    <property type="evidence" value="ECO:0007669"/>
    <property type="project" value="UniProtKB-UniRule"/>
</dbReference>
<dbReference type="CDD" id="cd07957">
    <property type="entry name" value="Anticodon_Ia_Met"/>
    <property type="match status" value="1"/>
</dbReference>
<dbReference type="CDD" id="cd00814">
    <property type="entry name" value="MetRS_core"/>
    <property type="match status" value="1"/>
</dbReference>
<dbReference type="CDD" id="cd02800">
    <property type="entry name" value="tRNA_bind_EcMetRS_like"/>
    <property type="match status" value="1"/>
</dbReference>
<dbReference type="FunFam" id="1.10.730.10:FF:000026">
    <property type="entry name" value="Methionine--tRNA ligase"/>
    <property type="match status" value="1"/>
</dbReference>
<dbReference type="FunFam" id="2.170.220.10:FF:000002">
    <property type="entry name" value="Methionine--tRNA ligase"/>
    <property type="match status" value="1"/>
</dbReference>
<dbReference type="FunFam" id="2.40.50.140:FF:000042">
    <property type="entry name" value="Methionine--tRNA ligase"/>
    <property type="match status" value="1"/>
</dbReference>
<dbReference type="Gene3D" id="2.170.220.10">
    <property type="match status" value="1"/>
</dbReference>
<dbReference type="Gene3D" id="3.40.50.620">
    <property type="entry name" value="HUPs"/>
    <property type="match status" value="1"/>
</dbReference>
<dbReference type="Gene3D" id="1.10.730.10">
    <property type="entry name" value="Isoleucyl-tRNA Synthetase, Domain 1"/>
    <property type="match status" value="1"/>
</dbReference>
<dbReference type="Gene3D" id="2.40.50.140">
    <property type="entry name" value="Nucleic acid-binding proteins"/>
    <property type="match status" value="1"/>
</dbReference>
<dbReference type="HAMAP" id="MF_01228">
    <property type="entry name" value="Met_tRNA_synth_type2"/>
    <property type="match status" value="1"/>
</dbReference>
<dbReference type="InterPro" id="IPR041872">
    <property type="entry name" value="Anticodon_Met"/>
</dbReference>
<dbReference type="InterPro" id="IPR004495">
    <property type="entry name" value="Met-tRNA-synth_bsu_C"/>
</dbReference>
<dbReference type="InterPro" id="IPR014758">
    <property type="entry name" value="Met-tRNA_synth"/>
</dbReference>
<dbReference type="InterPro" id="IPR023457">
    <property type="entry name" value="Met-tRNA_synth_2"/>
</dbReference>
<dbReference type="InterPro" id="IPR015413">
    <property type="entry name" value="Methionyl/Leucyl_tRNA_Synth"/>
</dbReference>
<dbReference type="InterPro" id="IPR033911">
    <property type="entry name" value="MetRS_core"/>
</dbReference>
<dbReference type="InterPro" id="IPR012340">
    <property type="entry name" value="NA-bd_OB-fold"/>
</dbReference>
<dbReference type="InterPro" id="IPR014729">
    <property type="entry name" value="Rossmann-like_a/b/a_fold"/>
</dbReference>
<dbReference type="InterPro" id="IPR002547">
    <property type="entry name" value="tRNA-bd_dom"/>
</dbReference>
<dbReference type="InterPro" id="IPR009080">
    <property type="entry name" value="tRNAsynth_Ia_anticodon-bd"/>
</dbReference>
<dbReference type="NCBIfam" id="TIGR00398">
    <property type="entry name" value="metG"/>
    <property type="match status" value="1"/>
</dbReference>
<dbReference type="NCBIfam" id="TIGR00399">
    <property type="entry name" value="metG_C_term"/>
    <property type="match status" value="1"/>
</dbReference>
<dbReference type="NCBIfam" id="NF008900">
    <property type="entry name" value="PRK12267.1"/>
    <property type="match status" value="1"/>
</dbReference>
<dbReference type="PANTHER" id="PTHR43326:SF1">
    <property type="entry name" value="METHIONINE--TRNA LIGASE, MITOCHONDRIAL"/>
    <property type="match status" value="1"/>
</dbReference>
<dbReference type="PANTHER" id="PTHR43326">
    <property type="entry name" value="METHIONYL-TRNA SYNTHETASE"/>
    <property type="match status" value="1"/>
</dbReference>
<dbReference type="Pfam" id="PF19303">
    <property type="entry name" value="Anticodon_3"/>
    <property type="match status" value="1"/>
</dbReference>
<dbReference type="Pfam" id="PF09334">
    <property type="entry name" value="tRNA-synt_1g"/>
    <property type="match status" value="1"/>
</dbReference>
<dbReference type="Pfam" id="PF01588">
    <property type="entry name" value="tRNA_bind"/>
    <property type="match status" value="1"/>
</dbReference>
<dbReference type="PRINTS" id="PR01041">
    <property type="entry name" value="TRNASYNTHMET"/>
</dbReference>
<dbReference type="SUPFAM" id="SSF47323">
    <property type="entry name" value="Anticodon-binding domain of a subclass of class I aminoacyl-tRNA synthetases"/>
    <property type="match status" value="1"/>
</dbReference>
<dbReference type="SUPFAM" id="SSF50249">
    <property type="entry name" value="Nucleic acid-binding proteins"/>
    <property type="match status" value="1"/>
</dbReference>
<dbReference type="SUPFAM" id="SSF52374">
    <property type="entry name" value="Nucleotidylyl transferase"/>
    <property type="match status" value="1"/>
</dbReference>
<dbReference type="PROSITE" id="PS50886">
    <property type="entry name" value="TRBD"/>
    <property type="match status" value="1"/>
</dbReference>
<comment type="function">
    <text evidence="1">Is required not only for elongation of protein synthesis but also for the initiation of all mRNA translation through initiator tRNA(fMet) aminoacylation.</text>
</comment>
<comment type="catalytic activity">
    <reaction>
        <text>tRNA(Met) + L-methionine + ATP = L-methionyl-tRNA(Met) + AMP + diphosphate</text>
        <dbReference type="Rhea" id="RHEA:13481"/>
        <dbReference type="Rhea" id="RHEA-COMP:9667"/>
        <dbReference type="Rhea" id="RHEA-COMP:9698"/>
        <dbReference type="ChEBI" id="CHEBI:30616"/>
        <dbReference type="ChEBI" id="CHEBI:33019"/>
        <dbReference type="ChEBI" id="CHEBI:57844"/>
        <dbReference type="ChEBI" id="CHEBI:78442"/>
        <dbReference type="ChEBI" id="CHEBI:78530"/>
        <dbReference type="ChEBI" id="CHEBI:456215"/>
        <dbReference type="EC" id="6.1.1.10"/>
    </reaction>
</comment>
<comment type="subunit">
    <text evidence="1">Homodimer.</text>
</comment>
<comment type="subcellular location">
    <subcellularLocation>
        <location evidence="1">Cytoplasm</location>
    </subcellularLocation>
</comment>
<comment type="similarity">
    <text evidence="2">Belongs to the class-I aminoacyl-tRNA synthetase family. MetG type 2B subfamily.</text>
</comment>
<comment type="sequence caution" evidence="2">
    <conflict type="erroneous initiation">
        <sequence resource="EMBL-CDS" id="BAC64652"/>
    </conflict>
</comment>
<gene>
    <name type="primary">metG</name>
    <name type="synonym">metS</name>
    <name type="ordered locus">SPs1557</name>
</gene>
<reference key="1">
    <citation type="journal article" date="2003" name="Genome Res.">
        <title>Genome sequence of an M3 strain of Streptococcus pyogenes reveals a large-scale genomic rearrangement in invasive strains and new insights into phage evolution.</title>
        <authorList>
            <person name="Nakagawa I."/>
            <person name="Kurokawa K."/>
            <person name="Yamashita A."/>
            <person name="Nakata M."/>
            <person name="Tomiyasu Y."/>
            <person name="Okahashi N."/>
            <person name="Kawabata S."/>
            <person name="Yamazaki K."/>
            <person name="Shiba T."/>
            <person name="Yasunaga T."/>
            <person name="Hayashi H."/>
            <person name="Hattori M."/>
            <person name="Hamada S."/>
        </authorList>
    </citation>
    <scope>NUCLEOTIDE SEQUENCE [LARGE SCALE GENOMIC DNA]</scope>
    <source>
        <strain>SSI-1</strain>
    </source>
</reference>
<keyword id="KW-0030">Aminoacyl-tRNA synthetase</keyword>
<keyword id="KW-0067">ATP-binding</keyword>
<keyword id="KW-0963">Cytoplasm</keyword>
<keyword id="KW-0436">Ligase</keyword>
<keyword id="KW-0547">Nucleotide-binding</keyword>
<keyword id="KW-0648">Protein biosynthesis</keyword>
<keyword id="KW-0694">RNA-binding</keyword>
<keyword id="KW-0820">tRNA-binding</keyword>